<sequence>MAKAPVKAGKKKSFKKKEKRVVHTGVVHIQATFNNTIVTISDQEGNTISWSSAGSLGFRGSRKGTPFAAQQAAMTAANKANETGLRVVEVRVSGPGSGRESAVRALSTAGIEVRAIKDVTPIPHNGCRPPKKRRV</sequence>
<evidence type="ECO:0000255" key="1">
    <source>
        <dbReference type="HAMAP-Rule" id="MF_01310"/>
    </source>
</evidence>
<evidence type="ECO:0000305" key="2"/>
<protein>
    <recommendedName>
        <fullName evidence="1">Small ribosomal subunit protein uS11</fullName>
    </recommendedName>
    <alternativeName>
        <fullName evidence="2">30S ribosomal protein S11</fullName>
    </alternativeName>
</protein>
<keyword id="KW-0687">Ribonucleoprotein</keyword>
<keyword id="KW-0689">Ribosomal protein</keyword>
<keyword id="KW-0694">RNA-binding</keyword>
<keyword id="KW-0699">rRNA-binding</keyword>
<reference key="1">
    <citation type="journal article" date="2009" name="Appl. Environ. Microbiol.">
        <title>Three genomes from the phylum Acidobacteria provide insight into the lifestyles of these microorganisms in soils.</title>
        <authorList>
            <person name="Ward N.L."/>
            <person name="Challacombe J.F."/>
            <person name="Janssen P.H."/>
            <person name="Henrissat B."/>
            <person name="Coutinho P.M."/>
            <person name="Wu M."/>
            <person name="Xie G."/>
            <person name="Haft D.H."/>
            <person name="Sait M."/>
            <person name="Badger J."/>
            <person name="Barabote R.D."/>
            <person name="Bradley B."/>
            <person name="Brettin T.S."/>
            <person name="Brinkac L.M."/>
            <person name="Bruce D."/>
            <person name="Creasy T."/>
            <person name="Daugherty S.C."/>
            <person name="Davidsen T.M."/>
            <person name="DeBoy R.T."/>
            <person name="Detter J.C."/>
            <person name="Dodson R.J."/>
            <person name="Durkin A.S."/>
            <person name="Ganapathy A."/>
            <person name="Gwinn-Giglio M."/>
            <person name="Han C.S."/>
            <person name="Khouri H."/>
            <person name="Kiss H."/>
            <person name="Kothari S.P."/>
            <person name="Madupu R."/>
            <person name="Nelson K.E."/>
            <person name="Nelson W.C."/>
            <person name="Paulsen I."/>
            <person name="Penn K."/>
            <person name="Ren Q."/>
            <person name="Rosovitz M.J."/>
            <person name="Selengut J.D."/>
            <person name="Shrivastava S."/>
            <person name="Sullivan S.A."/>
            <person name="Tapia R."/>
            <person name="Thompson L.S."/>
            <person name="Watkins K.L."/>
            <person name="Yang Q."/>
            <person name="Yu C."/>
            <person name="Zafar N."/>
            <person name="Zhou L."/>
            <person name="Kuske C.R."/>
        </authorList>
    </citation>
    <scope>NUCLEOTIDE SEQUENCE [LARGE SCALE GENOMIC DNA]</scope>
    <source>
        <strain>Ellin6076</strain>
    </source>
</reference>
<accession>Q01WB8</accession>
<proteinExistence type="inferred from homology"/>
<feature type="chain" id="PRO_0000294859" description="Small ribosomal subunit protein uS11">
    <location>
        <begin position="1"/>
        <end position="135"/>
    </location>
</feature>
<organism>
    <name type="scientific">Solibacter usitatus (strain Ellin6076)</name>
    <dbReference type="NCBI Taxonomy" id="234267"/>
    <lineage>
        <taxon>Bacteria</taxon>
        <taxon>Pseudomonadati</taxon>
        <taxon>Acidobacteriota</taxon>
        <taxon>Terriglobia</taxon>
        <taxon>Bryobacterales</taxon>
        <taxon>Solibacteraceae</taxon>
        <taxon>Candidatus Solibacter</taxon>
    </lineage>
</organism>
<comment type="function">
    <text evidence="1">Located on the platform of the 30S subunit, it bridges several disparate RNA helices of the 16S rRNA. Forms part of the Shine-Dalgarno cleft in the 70S ribosome.</text>
</comment>
<comment type="subunit">
    <text evidence="1">Part of the 30S ribosomal subunit. Interacts with proteins S7 and S18. Binds to IF-3.</text>
</comment>
<comment type="similarity">
    <text evidence="1">Belongs to the universal ribosomal protein uS11 family.</text>
</comment>
<dbReference type="EMBL" id="CP000473">
    <property type="protein sequence ID" value="ABJ86047.1"/>
    <property type="molecule type" value="Genomic_DNA"/>
</dbReference>
<dbReference type="SMR" id="Q01WB8"/>
<dbReference type="FunCoup" id="Q01WB8">
    <property type="interactions" value="661"/>
</dbReference>
<dbReference type="STRING" id="234267.Acid_5092"/>
<dbReference type="KEGG" id="sus:Acid_5092"/>
<dbReference type="eggNOG" id="COG0100">
    <property type="taxonomic scope" value="Bacteria"/>
</dbReference>
<dbReference type="HOGENOM" id="CLU_072439_5_0_0"/>
<dbReference type="InParanoid" id="Q01WB8"/>
<dbReference type="OrthoDB" id="9806415at2"/>
<dbReference type="GO" id="GO:1990904">
    <property type="term" value="C:ribonucleoprotein complex"/>
    <property type="evidence" value="ECO:0007669"/>
    <property type="project" value="UniProtKB-KW"/>
</dbReference>
<dbReference type="GO" id="GO:0005840">
    <property type="term" value="C:ribosome"/>
    <property type="evidence" value="ECO:0007669"/>
    <property type="project" value="UniProtKB-KW"/>
</dbReference>
<dbReference type="GO" id="GO:0019843">
    <property type="term" value="F:rRNA binding"/>
    <property type="evidence" value="ECO:0007669"/>
    <property type="project" value="UniProtKB-UniRule"/>
</dbReference>
<dbReference type="GO" id="GO:0003735">
    <property type="term" value="F:structural constituent of ribosome"/>
    <property type="evidence" value="ECO:0007669"/>
    <property type="project" value="InterPro"/>
</dbReference>
<dbReference type="GO" id="GO:0006412">
    <property type="term" value="P:translation"/>
    <property type="evidence" value="ECO:0007669"/>
    <property type="project" value="UniProtKB-UniRule"/>
</dbReference>
<dbReference type="FunFam" id="3.30.420.80:FF:000001">
    <property type="entry name" value="30S ribosomal protein S11"/>
    <property type="match status" value="1"/>
</dbReference>
<dbReference type="Gene3D" id="3.30.420.80">
    <property type="entry name" value="Ribosomal protein S11"/>
    <property type="match status" value="1"/>
</dbReference>
<dbReference type="HAMAP" id="MF_01310">
    <property type="entry name" value="Ribosomal_uS11"/>
    <property type="match status" value="1"/>
</dbReference>
<dbReference type="InterPro" id="IPR001971">
    <property type="entry name" value="Ribosomal_uS11"/>
</dbReference>
<dbReference type="InterPro" id="IPR019981">
    <property type="entry name" value="Ribosomal_uS11_bac-type"/>
</dbReference>
<dbReference type="InterPro" id="IPR018102">
    <property type="entry name" value="Ribosomal_uS11_CS"/>
</dbReference>
<dbReference type="InterPro" id="IPR036967">
    <property type="entry name" value="Ribosomal_uS11_sf"/>
</dbReference>
<dbReference type="NCBIfam" id="NF003698">
    <property type="entry name" value="PRK05309.1"/>
    <property type="match status" value="1"/>
</dbReference>
<dbReference type="NCBIfam" id="TIGR03632">
    <property type="entry name" value="uS11_bact"/>
    <property type="match status" value="1"/>
</dbReference>
<dbReference type="PANTHER" id="PTHR11759">
    <property type="entry name" value="40S RIBOSOMAL PROTEIN S14/30S RIBOSOMAL PROTEIN S11"/>
    <property type="match status" value="1"/>
</dbReference>
<dbReference type="Pfam" id="PF00411">
    <property type="entry name" value="Ribosomal_S11"/>
    <property type="match status" value="1"/>
</dbReference>
<dbReference type="PIRSF" id="PIRSF002131">
    <property type="entry name" value="Ribosomal_S11"/>
    <property type="match status" value="1"/>
</dbReference>
<dbReference type="SUPFAM" id="SSF53137">
    <property type="entry name" value="Translational machinery components"/>
    <property type="match status" value="1"/>
</dbReference>
<dbReference type="PROSITE" id="PS00054">
    <property type="entry name" value="RIBOSOMAL_S11"/>
    <property type="match status" value="1"/>
</dbReference>
<gene>
    <name evidence="1" type="primary">rpsK</name>
    <name type="ordered locus">Acid_5092</name>
</gene>
<name>RS11_SOLUE</name>